<reference key="1">
    <citation type="journal article" date="2011" name="PLoS Genet.">
        <title>Comparative genomic analysis of human fungal pathogens causing paracoccidioidomycosis.</title>
        <authorList>
            <person name="Desjardins C.A."/>
            <person name="Champion M.D."/>
            <person name="Holder J.W."/>
            <person name="Muszewska A."/>
            <person name="Goldberg J."/>
            <person name="Bailao A.M."/>
            <person name="Brigido M.M."/>
            <person name="Ferreira M.E."/>
            <person name="Garcia A.M."/>
            <person name="Grynberg M."/>
            <person name="Gujja S."/>
            <person name="Heiman D.I."/>
            <person name="Henn M.R."/>
            <person name="Kodira C.D."/>
            <person name="Leon-Narvaez H."/>
            <person name="Longo L.V.G."/>
            <person name="Ma L.-J."/>
            <person name="Malavazi I."/>
            <person name="Matsuo A.L."/>
            <person name="Morais F.V."/>
            <person name="Pereira M."/>
            <person name="Rodriguez-Brito S."/>
            <person name="Sakthikumar S."/>
            <person name="Salem-Izacc S.M."/>
            <person name="Sykes S.M."/>
            <person name="Teixeira M.M."/>
            <person name="Vallejo M.C."/>
            <person name="Walter M.E."/>
            <person name="Yandava C."/>
            <person name="Young S."/>
            <person name="Zeng Q."/>
            <person name="Zucker J."/>
            <person name="Felipe M.S."/>
            <person name="Goldman G.H."/>
            <person name="Haas B.J."/>
            <person name="McEwen J.G."/>
            <person name="Nino-Vega G."/>
            <person name="Puccia R."/>
            <person name="San-Blas G."/>
            <person name="Soares C.M."/>
            <person name="Birren B.W."/>
            <person name="Cuomo C.A."/>
        </authorList>
    </citation>
    <scope>NUCLEOTIDE SEQUENCE [LARGE SCALE GENOMIC DNA]</scope>
    <source>
        <strain>Pb03</strain>
    </source>
</reference>
<name>VPS10_PARBP</name>
<dbReference type="EMBL" id="KN305535">
    <property type="protein sequence ID" value="EEH21575.1"/>
    <property type="molecule type" value="Genomic_DNA"/>
</dbReference>
<dbReference type="SMR" id="C0S7J1"/>
<dbReference type="GlyCosmos" id="C0S7J1">
    <property type="glycosylation" value="4 sites, No reported glycans"/>
</dbReference>
<dbReference type="VEuPathDB" id="FungiDB:PABG_03791"/>
<dbReference type="HOGENOM" id="CLU_000700_0_0_1"/>
<dbReference type="OrthoDB" id="11270at33183"/>
<dbReference type="GO" id="GO:0005829">
    <property type="term" value="C:cytosol"/>
    <property type="evidence" value="ECO:0007669"/>
    <property type="project" value="GOC"/>
</dbReference>
<dbReference type="GO" id="GO:0005794">
    <property type="term" value="C:Golgi apparatus"/>
    <property type="evidence" value="ECO:0007669"/>
    <property type="project" value="UniProtKB-SubCell"/>
</dbReference>
<dbReference type="GO" id="GO:0016020">
    <property type="term" value="C:membrane"/>
    <property type="evidence" value="ECO:0007669"/>
    <property type="project" value="UniProtKB-KW"/>
</dbReference>
<dbReference type="GO" id="GO:0006895">
    <property type="term" value="P:Golgi to endosome transport"/>
    <property type="evidence" value="ECO:0007669"/>
    <property type="project" value="TreeGrafter"/>
</dbReference>
<dbReference type="GO" id="GO:0006896">
    <property type="term" value="P:Golgi to vacuole transport"/>
    <property type="evidence" value="ECO:0007669"/>
    <property type="project" value="TreeGrafter"/>
</dbReference>
<dbReference type="GO" id="GO:0006623">
    <property type="term" value="P:protein targeting to vacuole"/>
    <property type="evidence" value="ECO:0007669"/>
    <property type="project" value="TreeGrafter"/>
</dbReference>
<dbReference type="CDD" id="cd15482">
    <property type="entry name" value="Sialidase_non-viral"/>
    <property type="match status" value="2"/>
</dbReference>
<dbReference type="FunFam" id="3.30.60.270:FF:000005">
    <property type="entry name" value="Sortilin"/>
    <property type="match status" value="2"/>
</dbReference>
<dbReference type="FunFam" id="2.10.70.80:FF:000001">
    <property type="entry name" value="Sortilin-related VPS10 domain-containing receptor 1"/>
    <property type="match status" value="1"/>
</dbReference>
<dbReference type="Gene3D" id="2.10.70.80">
    <property type="match status" value="2"/>
</dbReference>
<dbReference type="Gene3D" id="3.30.60.270">
    <property type="match status" value="2"/>
</dbReference>
<dbReference type="Gene3D" id="2.130.10.10">
    <property type="entry name" value="YVTN repeat-like/Quinoprotein amine dehydrogenase"/>
    <property type="match status" value="2"/>
</dbReference>
<dbReference type="InterPro" id="IPR031777">
    <property type="entry name" value="Sortilin_C"/>
</dbReference>
<dbReference type="InterPro" id="IPR031778">
    <property type="entry name" value="Sortilin_N"/>
</dbReference>
<dbReference type="InterPro" id="IPR006581">
    <property type="entry name" value="VPS10"/>
</dbReference>
<dbReference type="InterPro" id="IPR050310">
    <property type="entry name" value="VPS10-sortilin"/>
</dbReference>
<dbReference type="InterPro" id="IPR015943">
    <property type="entry name" value="WD40/YVTN_repeat-like_dom_sf"/>
</dbReference>
<dbReference type="PANTHER" id="PTHR12106">
    <property type="entry name" value="SORTILIN RELATED"/>
    <property type="match status" value="1"/>
</dbReference>
<dbReference type="PANTHER" id="PTHR12106:SF27">
    <property type="entry name" value="SORTILIN-RELATED RECEPTOR"/>
    <property type="match status" value="1"/>
</dbReference>
<dbReference type="Pfam" id="PF15902">
    <property type="entry name" value="Sortilin-Vps10"/>
    <property type="match status" value="2"/>
</dbReference>
<dbReference type="Pfam" id="PF15901">
    <property type="entry name" value="Sortilin_C"/>
    <property type="match status" value="2"/>
</dbReference>
<dbReference type="SMART" id="SM00602">
    <property type="entry name" value="VPS10"/>
    <property type="match status" value="2"/>
</dbReference>
<dbReference type="SUPFAM" id="SSF110296">
    <property type="entry name" value="Oligoxyloglucan reducing end-specific cellobiohydrolase"/>
    <property type="match status" value="2"/>
</dbReference>
<feature type="signal peptide" evidence="2">
    <location>
        <begin position="1"/>
        <end position="21"/>
    </location>
</feature>
<feature type="chain" id="PRO_0000407529" description="Vacuolar protein sorting/targeting protein 10">
    <location>
        <begin position="22"/>
        <end position="1496"/>
    </location>
</feature>
<feature type="topological domain" description="Lumenal" evidence="2">
    <location>
        <begin position="22"/>
        <end position="1362"/>
    </location>
</feature>
<feature type="transmembrane region" description="Helical" evidence="2">
    <location>
        <begin position="1363"/>
        <end position="1383"/>
    </location>
</feature>
<feature type="topological domain" description="Cytoplasmic" evidence="2">
    <location>
        <begin position="1384"/>
        <end position="1409"/>
    </location>
</feature>
<feature type="transmembrane region" description="Helical" evidence="2">
    <location>
        <begin position="1410"/>
        <end position="1430"/>
    </location>
</feature>
<feature type="topological domain" description="Lumenal" evidence="2">
    <location>
        <begin position="1431"/>
        <end position="1496"/>
    </location>
</feature>
<feature type="repeat" description="BNR 1">
    <location>
        <begin position="61"/>
        <end position="71"/>
    </location>
</feature>
<feature type="repeat" description="BNR 2">
    <location>
        <begin position="377"/>
        <end position="387"/>
    </location>
</feature>
<feature type="repeat" description="BNR 3">
    <location>
        <begin position="438"/>
        <end position="448"/>
    </location>
</feature>
<feature type="repeat" description="BNR 4">
    <location>
        <begin position="480"/>
        <end position="489"/>
    </location>
</feature>
<feature type="repeat" description="BNR 5">
    <location>
        <begin position="722"/>
        <end position="732"/>
    </location>
</feature>
<feature type="repeat" description="BNR 6">
    <location>
        <begin position="819"/>
        <end position="829"/>
    </location>
</feature>
<feature type="repeat" description="BNR 7">
    <location>
        <begin position="1106"/>
        <end position="1116"/>
    </location>
</feature>
<feature type="repeat" description="BNR 8">
    <location>
        <begin position="1147"/>
        <end position="1157"/>
    </location>
</feature>
<feature type="glycosylation site" description="N-linked (GlcNAc...) asparagine" evidence="2">
    <location>
        <position position="190"/>
    </location>
</feature>
<feature type="glycosylation site" description="N-linked (GlcNAc...) asparagine" evidence="2">
    <location>
        <position position="297"/>
    </location>
</feature>
<feature type="glycosylation site" description="N-linked (GlcNAc...) asparagine" evidence="2">
    <location>
        <position position="322"/>
    </location>
</feature>
<feature type="glycosylation site" description="N-linked (GlcNAc...) asparagine" evidence="2">
    <location>
        <position position="971"/>
    </location>
</feature>
<protein>
    <recommendedName>
        <fullName>Vacuolar protein sorting/targeting protein 10</fullName>
    </recommendedName>
    <alternativeName>
        <fullName>Carboxypeptidase Y receptor</fullName>
        <shortName>CPY receptor</shortName>
    </alternativeName>
    <alternativeName>
        <fullName>Sortilin VPS10</fullName>
    </alternativeName>
    <alternativeName>
        <fullName>Vacuolar carboxypeptidase sorting receptor VPS10</fullName>
    </alternativeName>
</protein>
<evidence type="ECO:0000250" key="1"/>
<evidence type="ECO:0000255" key="2"/>
<evidence type="ECO:0000305" key="3"/>
<keyword id="KW-0325">Glycoprotein</keyword>
<keyword id="KW-0333">Golgi apparatus</keyword>
<keyword id="KW-0472">Membrane</keyword>
<keyword id="KW-0653">Protein transport</keyword>
<keyword id="KW-0675">Receptor</keyword>
<keyword id="KW-0677">Repeat</keyword>
<keyword id="KW-0732">Signal</keyword>
<keyword id="KW-0812">Transmembrane</keyword>
<keyword id="KW-1133">Transmembrane helix</keyword>
<keyword id="KW-0813">Transport</keyword>
<organism>
    <name type="scientific">Paracoccidioides brasiliensis (strain Pb03)</name>
    <dbReference type="NCBI Taxonomy" id="482561"/>
    <lineage>
        <taxon>Eukaryota</taxon>
        <taxon>Fungi</taxon>
        <taxon>Dikarya</taxon>
        <taxon>Ascomycota</taxon>
        <taxon>Pezizomycotina</taxon>
        <taxon>Eurotiomycetes</taxon>
        <taxon>Eurotiomycetidae</taxon>
        <taxon>Onygenales</taxon>
        <taxon>Ajellomycetaceae</taxon>
        <taxon>Paracoccidioides</taxon>
    </lineage>
</organism>
<proteinExistence type="inferred from homology"/>
<accession>C0S7J1</accession>
<gene>
    <name type="primary">VPS10</name>
    <name type="ORF">PABG_03791</name>
</gene>
<comment type="function">
    <text evidence="1">Functions as a sorting receptor in the Golgi compartment required for the intracellular sorting and delivery of soluble vacuolar proteins, like carboxypeptidase Y (CPY) and proteinase A. Executes multiple rounds of sorting by cycling between the late Golgi and a prevacuolar endosome-like compartment (By similarity).</text>
</comment>
<comment type="subcellular location">
    <subcellularLocation>
        <location evidence="1">Golgi apparatus</location>
        <location evidence="1">trans-Golgi network membrane</location>
        <topology evidence="1">Multi-pass membrane protein</topology>
    </subcellularLocation>
    <subcellularLocation>
        <location evidence="1">Prevacuolar compartment membrane</location>
        <topology evidence="1">Multi-pass membrane protein</topology>
    </subcellularLocation>
    <text evidence="1">Cycles between the Golgi apparatus and the prevacuolar compartment.</text>
</comment>
<comment type="similarity">
    <text evidence="3">Belongs to the VPS10-related sortilin family.</text>
</comment>
<sequence length="1496" mass="167744">MILRRLVLAGSLLLATAFTSAKKADSPIITATRFDHEPINLFYFGDSDVVMLQDIKNGDVYVSRDAGVKWDMVNLDGLKGQALSLWSHPTDRTKAYILGKAGKHWVTNDQAVSWHEFSADVEFFQSLFPLVFHGKDSDRVLLQGHKCVGRDCKEVTYYTTDGFKTVDILIENARGCNWAVSTPIFGDGLNLSKEVNDRIFCIVPGLQSPWSDYNRLLYSDRFFKQDSGTEAPLDSGRAVSGVVRTASVKKYLLAAAKSARTSELALYVTDDGSQWHRAEFDGQRVEEDAYTVLESTNYSIQIDVVAETPSAPMGTLFTSNSNGTYFTRNIDHTNRNGLGFVDFEKIATIQGIILVNTVKNWEDVEMSALVEKKIISQISFDDGRTFQPLKAGKHDLHLHSVTHLSNSGRVFSSPAPGLVMGVGNTGGHLKDYYDGDLYVSDDAGITWRKALDEAHKYEFGDQGSVIVAVFDEGRTGKISYSLNHGKDWKEASLPDGIKIRARILTTMPDSTGLKFLLVGSSKRDSDVEHYVISISFTDMEERTCGKDDFETWPARLNEKNEPDCLMGHKQFYQRRKADVDCFIKKKFQEPVPQFEPCKCTVEDFECDFNFIRSTDGKSCVPARSLPVPEGACKKPNDKYMGSSGFRLIPGNACIREGGVELDKQIERVCTDTLTVPVSGEIVVQKTFFTADNYKGYFYLERKDSSNGDDETVIMITSELQIYITRDHGKNWKEIFPGETITRIVPHQYFDDVAYFLTNSGDGWYTLDRGENFRKFKAPIPPNQDKLPVLSFHPERRDWLIWTGAEECKTRGPQCHSVAYYSTNHGSEWHFLMQYVRRCEFIKREARGSSNNLVFCEQFENENPLNHHLQLLSTDDWFSEKKVHYNNILDFATMQEFIIVAVRGEKPEDSLSVGVSVDGETFAYADLPANVQIPVQRAYTVLESRTHAAFLHVTVNNVEDHEYGSIIKSNSNGTSYVLSLSAVNRNTYGYADFEKMQGMEGVAMANVVGNVADVEKGAAKKYRTMITHNDGAEWALLSPPSKDSEGRDYSCSTKGGKPTDKCALHLHSYTERADPRDTYSSPSAIGVMLGTGNVGEYLTLKSDADTFITRDGGITWQEVRKDRYQWEFGDSGSIIVIVPEARPTKTLFYSLDEGKSWKEFQFTEVEMLIRDISTVPSDTSRNFLLWGNEVGNGKKPGVAAVNIDFSNLKERHKQCVLNEEKPEADDYYLWEPMHPFQPNGCLFGHRAKYHRKRPDRDCFIGRELQHLDSIGDICECTRSDYECDYNYEPQIDGTCAPVPGLKPLDPKLICTEDPKAVEWYEPTGYRRIPLTKCEGGKQLHHIIPHACPNKEEEFLKKHPGLRGVGLFFVIMSPIGLAAAIGYYVYTRWDGKFGRIRLGDTGSGGFFASDSLLVSIPVAIVAGVVAVATALPLLASSLWRSVRGYARVPGGSSSQRVYSSRAAFAAQRADYAGVVDDEDELLGAEDFDEEENDDRGQV</sequence>